<feature type="chain" id="PRO_0000097210" description="(R)-phenoxypropionate/alpha-ketoglutarate-dioxygenase">
    <location>
        <begin position="1"/>
        <end position="295"/>
    </location>
</feature>
<feature type="binding site" evidence="1">
    <location>
        <position position="111"/>
    </location>
    <ligand>
        <name>Fe cation</name>
        <dbReference type="ChEBI" id="CHEBI:24875"/>
        <note>catalytic</note>
    </ligand>
</feature>
<feature type="binding site" evidence="1">
    <location>
        <position position="113"/>
    </location>
    <ligand>
        <name>Fe cation</name>
        <dbReference type="ChEBI" id="CHEBI:24875"/>
        <note>catalytic</note>
    </ligand>
</feature>
<feature type="binding site" evidence="1">
    <location>
        <position position="138"/>
    </location>
    <ligand>
        <name>2-oxoglutarate</name>
        <dbReference type="ChEBI" id="CHEBI:16810"/>
    </ligand>
</feature>
<feature type="binding site" evidence="1">
    <location>
        <position position="255"/>
    </location>
    <ligand>
        <name>2-oxoglutarate</name>
        <dbReference type="ChEBI" id="CHEBI:16810"/>
    </ligand>
</feature>
<feature type="binding site" evidence="1">
    <location>
        <position position="270"/>
    </location>
    <ligand>
        <name>Fe cation</name>
        <dbReference type="ChEBI" id="CHEBI:24875"/>
        <note>catalytic</note>
    </ligand>
</feature>
<feature type="binding site" evidence="1">
    <location>
        <position position="281"/>
    </location>
    <ligand>
        <name>2-oxoglutarate</name>
        <dbReference type="ChEBI" id="CHEBI:16810"/>
    </ligand>
</feature>
<feature type="sequence conflict" description="In Ref. 4; AA sequence." evidence="6" ref="4">
    <original>VL</original>
    <variation>GV</variation>
    <location>
        <begin position="23"/>
        <end position="24"/>
    </location>
</feature>
<feature type="sequence conflict" description="In Ref. 4; AA sequence." evidence="6" ref="4">
    <original>RRFGPVDPVPLLK</original>
    <variation>ETLSPTMQATIEGLN</variation>
    <location>
        <begin position="72"/>
        <end position="84"/>
    </location>
</feature>
<feature type="sequence conflict" description="In Ref. 4; AA sequence." evidence="6" ref="4">
    <original>ST</original>
    <variation>II</variation>
    <location>
        <begin position="114"/>
        <end position="115"/>
    </location>
</feature>
<feature type="helix" evidence="8">
    <location>
        <begin position="8"/>
        <end position="11"/>
    </location>
</feature>
<feature type="strand" evidence="8">
    <location>
        <begin position="13"/>
        <end position="24"/>
    </location>
</feature>
<feature type="strand" evidence="8">
    <location>
        <begin position="26"/>
        <end position="30"/>
    </location>
</feature>
<feature type="helix" evidence="8">
    <location>
        <begin position="39"/>
        <end position="52"/>
    </location>
</feature>
<feature type="strand" evidence="8">
    <location>
        <begin position="53"/>
        <end position="57"/>
    </location>
</feature>
<feature type="helix" evidence="8">
    <location>
        <begin position="64"/>
        <end position="72"/>
    </location>
</feature>
<feature type="strand" evidence="8">
    <location>
        <begin position="81"/>
        <end position="83"/>
    </location>
</feature>
<feature type="strand" evidence="8">
    <location>
        <begin position="89"/>
        <end position="97"/>
    </location>
</feature>
<feature type="strand" evidence="8">
    <location>
        <begin position="109"/>
        <end position="111"/>
    </location>
</feature>
<feature type="turn" evidence="8">
    <location>
        <begin position="113"/>
        <end position="116"/>
    </location>
</feature>
<feature type="strand" evidence="8">
    <location>
        <begin position="117"/>
        <end position="119"/>
    </location>
</feature>
<feature type="strand" evidence="8">
    <location>
        <begin position="122"/>
        <end position="130"/>
    </location>
</feature>
<feature type="strand" evidence="8">
    <location>
        <begin position="133"/>
        <end position="135"/>
    </location>
</feature>
<feature type="strand" evidence="8">
    <location>
        <begin position="138"/>
        <end position="142"/>
    </location>
</feature>
<feature type="helix" evidence="8">
    <location>
        <begin position="143"/>
        <end position="148"/>
    </location>
</feature>
<feature type="helix" evidence="8">
    <location>
        <begin position="152"/>
        <end position="158"/>
    </location>
</feature>
<feature type="strand" evidence="8">
    <location>
        <begin position="162"/>
        <end position="165"/>
    </location>
</feature>
<feature type="helix" evidence="8">
    <location>
        <begin position="168"/>
        <end position="171"/>
    </location>
</feature>
<feature type="helix" evidence="8">
    <location>
        <begin position="173"/>
        <end position="177"/>
    </location>
</feature>
<feature type="turn" evidence="8">
    <location>
        <begin position="184"/>
        <end position="186"/>
    </location>
</feature>
<feature type="helix" evidence="8">
    <location>
        <begin position="192"/>
        <end position="196"/>
    </location>
</feature>
<feature type="strand" evidence="8">
    <location>
        <begin position="199"/>
        <end position="206"/>
    </location>
</feature>
<feature type="turn" evidence="8">
    <location>
        <begin position="208"/>
        <end position="210"/>
    </location>
</feature>
<feature type="strand" evidence="8">
    <location>
        <begin position="213"/>
        <end position="215"/>
    </location>
</feature>
<feature type="turn" evidence="8">
    <location>
        <begin position="219"/>
        <end position="221"/>
    </location>
</feature>
<feature type="strand" evidence="8">
    <location>
        <begin position="222"/>
        <end position="225"/>
    </location>
</feature>
<feature type="helix" evidence="8">
    <location>
        <begin position="230"/>
        <end position="244"/>
    </location>
</feature>
<feature type="helix" evidence="8">
    <location>
        <begin position="247"/>
        <end position="249"/>
    </location>
</feature>
<feature type="strand" evidence="8">
    <location>
        <begin position="250"/>
        <end position="253"/>
    </location>
</feature>
<feature type="strand" evidence="8">
    <location>
        <begin position="260"/>
        <end position="264"/>
    </location>
</feature>
<feature type="turn" evidence="8">
    <location>
        <begin position="265"/>
        <end position="267"/>
    </location>
</feature>
<feature type="strand" evidence="8">
    <location>
        <begin position="268"/>
        <end position="272"/>
    </location>
</feature>
<feature type="strand" evidence="8">
    <location>
        <begin position="281"/>
        <end position="288"/>
    </location>
</feature>
<proteinExistence type="evidence at protein level"/>
<accession>P83310</accession>
<accession>Q67FR0</accession>
<organism>
    <name type="scientific">Delftia acidovorans</name>
    <name type="common">Pseudomonas acidovorans</name>
    <name type="synonym">Comamonas acidovorans</name>
    <dbReference type="NCBI Taxonomy" id="80866"/>
    <lineage>
        <taxon>Bacteria</taxon>
        <taxon>Pseudomonadati</taxon>
        <taxon>Pseudomonadota</taxon>
        <taxon>Betaproteobacteria</taxon>
        <taxon>Burkholderiales</taxon>
        <taxon>Comamonadaceae</taxon>
        <taxon>Delftia</taxon>
    </lineage>
</organism>
<comment type="function">
    <text evidence="4 5">Involved in the degradation of the phenoxypropionate herbicides. Catalyzes the enantiospecific cleavage of the ether bond in the herbicid R-dichlorprop ((R)-2-(2,4-dichlorophenoxy)propionate)(R-2,4-DP) and R-mecoprop ((R)-2-(4-chloro-2-methylphenoxy)propionate)(R-2,4-MCPP). It can also accept (RS)-2-(2,4,5-trichlorophenoxy)propionate, (RS)-2-(4-chlorophenoxy)propionate, (RS)-2-(m-chlorophenoxy)propionate, however it can only accept 2-oxoglutarate as oxygen acceptor.</text>
</comment>
<comment type="catalytic activity">
    <reaction evidence="4">
        <text>(R)-2-(4-chloro-2-methylphenoxy)propanoate + 2-oxoglutarate + O2 = 2-methyl-4-chlorophenol + pyruvate + succinate + CO2</text>
        <dbReference type="Rhea" id="RHEA:37815"/>
        <dbReference type="ChEBI" id="CHEBI:1800"/>
        <dbReference type="ChEBI" id="CHEBI:15361"/>
        <dbReference type="ChEBI" id="CHEBI:15379"/>
        <dbReference type="ChEBI" id="CHEBI:16526"/>
        <dbReference type="ChEBI" id="CHEBI:16810"/>
        <dbReference type="ChEBI" id="CHEBI:30031"/>
        <dbReference type="ChEBI" id="CHEBI:75284"/>
        <dbReference type="EC" id="1.14.11.44"/>
    </reaction>
</comment>
<comment type="catalytic activity">
    <reaction evidence="4">
        <text>(R)-(2,4-dichlorophenoxy)propanoate + 2-oxoglutarate + O2 = 2,4-dichlorophenol + pyruvate + succinate + CO2</text>
        <dbReference type="Rhea" id="RHEA:37823"/>
        <dbReference type="ChEBI" id="CHEBI:15361"/>
        <dbReference type="ChEBI" id="CHEBI:15379"/>
        <dbReference type="ChEBI" id="CHEBI:16526"/>
        <dbReference type="ChEBI" id="CHEBI:16738"/>
        <dbReference type="ChEBI" id="CHEBI:16810"/>
        <dbReference type="ChEBI" id="CHEBI:30031"/>
        <dbReference type="ChEBI" id="CHEBI:75288"/>
        <dbReference type="EC" id="1.14.11.44"/>
    </reaction>
</comment>
<comment type="cofactor">
    <cofactor evidence="4">
        <name>Fe cation</name>
        <dbReference type="ChEBI" id="CHEBI:24875"/>
    </cofactor>
</comment>
<comment type="cofactor">
    <cofactor evidence="4">
        <name>L-ascorbate</name>
        <dbReference type="ChEBI" id="CHEBI:38290"/>
    </cofactor>
</comment>
<comment type="activity regulation">
    <text evidence="4">Inhibited by divalent cations, most significantly by copper and nickel, and by diethylpyrocarbonate (DEPC).</text>
</comment>
<comment type="biophysicochemical properties">
    <kinetics>
        <KM evidence="4">27.8 uM for alpha-ketoglutarate (at pH 6 and 30 degrees Celsius)</KM>
        <KM evidence="4">54.9 uM for R-2,4-DP (at pH 6 and 30 degrees Celsius)</KM>
        <KM evidence="4">30 uM for R-2,4-MCPP (at pH 6 and 30 degrees Celsius)</KM>
        <KM evidence="4">130.8 uM for (RS)-2-(2,4,5-trichlorophenoxy)propionate (at pH 6 and 30 degrees Celsius)</KM>
        <KM evidence="4">131.4 uM for (RS)-2-(4-chlorophenoxy)propionate (at pH 6 and 30 degrees Celsius)</KM>
        <KM evidence="4">176.2 uM for (RS)-2-(m-chlorophenoxy)propionate (at pH 6 and 30 degrees Celsius)</KM>
        <KM evidence="4">261 uM for S-2,4-MCPP (at pH 6 and 30 degrees Celsius)</KM>
        <KM evidence="4">1305 uM for 2,4-dichlorophenoxyacetate (at pH 6 and 30 degrees Celsius)</KM>
        <text evidence="4">kcat is 65.2 min(-1) for dioxygenase activity with (RS)-2-(4-chlorophenoxy)propionate (at pH 6 and 30 degrees Celsius). kcat is 55.2 min(-1) for dioxygenase activity with R-2,4-DP (at pH 6 and 30 degrees Celsius). kcat is 50 min(-1) for dioxygenase activity with (RS)-2-(2,4,5-trichlorophenoxy)propionate (at pH 6 and 30 degrees Celsius). kcat is 34.4 min(-1) for dioxygenase activity with R-2,4-MCPP and (RS)-2-(m-chlorophenoxy)propionate (at pH 6 and 30 degrees Celsius). kcat is 20 min(-1) for dioxygenase activity with alpha-ketoglutarate (at pH 6 and 30 degrees Celsius). kcat is 7.6 min(-1) for dioxygenase activity with 2,4-dichlorophenoxyacetate (at pH 6 and 30 degrees Celsius). kcat is 3.8 min(-1) for dioxygenase activity with S-2,4-MCPP (at pH 6 and 30 degrees Celsius).</text>
    </kinetics>
    <phDependence>
        <text evidence="4">Optimum pH is about 6.</text>
    </phDependence>
    <temperatureDependence>
        <text evidence="4">Optimum temperature is 30 degrees Celsius.</text>
    </temperatureDependence>
</comment>
<comment type="pathway">
    <text evidence="7">Xenobiotic degradation; 2-(2,4-dichlorophenoxy)propanoate degradation.</text>
</comment>
<comment type="subunit">
    <text evidence="2">Homotrimer.</text>
</comment>
<comment type="induction">
    <text evidence="3">Repressed during growth on high concentrations of 2,4-dichlorophenoxypropionic acid (2,4-DCPP).</text>
</comment>
<comment type="similarity">
    <text evidence="6">Belongs to the TfdA dioxygenase family.</text>
</comment>
<reference key="1">
    <citation type="journal article" date="2004" name="Appl. Environ. Microbiol.">
        <title>Localization and characterization of two novel genes encoding stereospecific dioxygenases catalyzing 2(2,4-dichlorophenoxy)propionate cleavage in Delftia acidovorans MC1.</title>
        <authorList>
            <person name="Schleinitz K.M."/>
            <person name="Kleinsteuber S."/>
            <person name="Vallaeys T."/>
            <person name="Babel W."/>
        </authorList>
    </citation>
    <scope>NUCLEOTIDE SEQUENCE [GENOMIC DNA]</scope>
    <source>
        <strain>MC1</strain>
        <plasmid>pMC1</plasmid>
    </source>
</reference>
<reference key="2">
    <citation type="submission" date="2009-09" db="EMBL/GenBank/DDBJ databases">
        <title>Genetic background of enantiospecific 2,4-dichlorophenoxypropionate cleavage in Delftia acidovorans MC1.</title>
        <authorList>
            <person name="Schleinitz K.M."/>
            <person name="Kleinsteuber S."/>
            <person name="Vallaeys T."/>
            <person name="Babel W."/>
        </authorList>
    </citation>
    <scope>NUCLEOTIDE SEQUENCE [GENOMIC DNA]</scope>
    <source>
        <strain>MC1</strain>
        <plasmid>pMC1</plasmid>
    </source>
</reference>
<reference key="3">
    <citation type="submission" date="2009-09" db="EMBL/GenBank/DDBJ databases">
        <title>Structural analysis of ISCR8, a subgroup of IS91-like elements.</title>
        <authorList>
            <person name="Schleinitz K.M."/>
            <person name="Vallaeys T."/>
            <person name="Kleinsteuber S."/>
        </authorList>
    </citation>
    <scope>NUCLEOTIDE SEQUENCE [GENOMIC DNA]</scope>
    <source>
        <strain>MC1</strain>
        <plasmid>pMC1</plasmid>
    </source>
</reference>
<reference key="4">
    <citation type="journal article" date="2002" name="Microbiol. Res.">
        <title>The two enantiospecific dichlorprop/alpha-ketoglutarate-dioxygenases from Delftia acidovorans MC1 -- protein and sequence data of RdpA and SdpA.</title>
        <authorList>
            <person name="Westendorf A."/>
            <person name="Benndorf D."/>
            <person name="Mueller R.H."/>
            <person name="Babel W."/>
        </authorList>
    </citation>
    <scope>PROTEIN SEQUENCE OF 1-24 AND 43-115</scope>
    <scope>FUNCTION</scope>
    <scope>SUBUNIT</scope>
    <source>
        <strain>MC1</strain>
    </source>
</reference>
<reference key="5">
    <citation type="journal article" date="2003" name="Acta Biotechnol.">
        <title>Purification and characterisation of the enantiospecific dioxygenases from Delftia acidovorans MC1 initiating the degradation of phenoxypropionate and phenoxyacetate herbicides.</title>
        <authorList>
            <person name="Westendorf A."/>
            <person name="Mueller R.H."/>
            <person name="Babel W."/>
        </authorList>
    </citation>
    <scope>FUNCTION</scope>
    <scope>CATALYTIC ACTIVITY</scope>
    <scope>BIOPHYSICOCHEMICAL PROPERTIES</scope>
    <scope>COFACTOR</scope>
    <scope>ACTIVITY REGULATION</scope>
    <scope>PATHWAY</scope>
    <scope>SUBSTRATE SPECIFICITY</scope>
    <source>
        <strain>MC1</strain>
    </source>
</reference>
<reference key="6">
    <citation type="journal article" date="2004" name="Microbiology">
        <title>Regulation of catabolic enzymes during long-term exposure of Delftia acidovorans MC1 to chlorophenoxy herbicides.</title>
        <authorList>
            <person name="Benndorf D."/>
            <person name="Davidson I."/>
            <person name="Babel W."/>
        </authorList>
    </citation>
    <scope>INDUCTION</scope>
    <source>
        <strain>MC1</strain>
    </source>
</reference>
<keyword id="KW-0002">3D-structure</keyword>
<keyword id="KW-0223">Dioxygenase</keyword>
<keyword id="KW-0903">Direct protein sequencing</keyword>
<keyword id="KW-0408">Iron</keyword>
<keyword id="KW-0479">Metal-binding</keyword>
<keyword id="KW-0560">Oxidoreductase</keyword>
<keyword id="KW-0614">Plasmid</keyword>
<keyword id="KW-0847">Vitamin C</keyword>
<geneLocation type="plasmid">
    <name>pMC1</name>
</geneLocation>
<protein>
    <recommendedName>
        <fullName evidence="5">(R)-phenoxypropionate/alpha-ketoglutarate-dioxygenase</fullName>
        <shortName evidence="5">RdpA</shortName>
        <ecNumber evidence="4">1.14.11.44</ecNumber>
    </recommendedName>
    <alternativeName>
        <fullName evidence="5">(R)-dichlorprop/(R)-mecoprop dioxygenase</fullName>
    </alternativeName>
    <alternativeName>
        <fullName evidence="5">Alpha-ketoglutarate-dependent dioxygenase</fullName>
    </alternativeName>
    <alternativeName>
        <fullName evidence="5">Dichlorprop/alpha-ketoglutarate-dioxygenase</fullName>
    </alternativeName>
    <alternativeName>
        <fullName evidence="5">Mecoprop/alpha-ketoglutarate-dioxygenase</fullName>
    </alternativeName>
</protein>
<name>RDPA_DELAC</name>
<gene>
    <name evidence="5" type="primary">rdpA</name>
</gene>
<evidence type="ECO:0000250" key="1">
    <source>
        <dbReference type="UniProtKB" id="P37610"/>
    </source>
</evidence>
<evidence type="ECO:0000269" key="2">
    <source>
    </source>
</evidence>
<evidence type="ECO:0000269" key="3">
    <source>
    </source>
</evidence>
<evidence type="ECO:0000269" key="4">
    <source ref="5"/>
</evidence>
<evidence type="ECO:0000303" key="5">
    <source>
    </source>
</evidence>
<evidence type="ECO:0000305" key="6"/>
<evidence type="ECO:0000305" key="7">
    <source ref="5"/>
</evidence>
<evidence type="ECO:0007829" key="8">
    <source>
        <dbReference type="PDB" id="5BK9"/>
    </source>
</evidence>
<dbReference type="EC" id="1.14.11.44" evidence="4"/>
<dbReference type="EMBL" id="AY327575">
    <property type="protein sequence ID" value="AAP88290.1"/>
    <property type="molecule type" value="Genomic_DNA"/>
</dbReference>
<dbReference type="PDB" id="5BK9">
    <property type="method" value="X-ray"/>
    <property type="resolution" value="1.51 A"/>
    <property type="chains" value="A/B=1-295"/>
</dbReference>
<dbReference type="PDB" id="5BKB">
    <property type="method" value="X-ray"/>
    <property type="resolution" value="1.58 A"/>
    <property type="chains" value="A/B=1-295"/>
</dbReference>
<dbReference type="PDB" id="5BKC">
    <property type="method" value="X-ray"/>
    <property type="resolution" value="1.80 A"/>
    <property type="chains" value="A/B=1-295"/>
</dbReference>
<dbReference type="PDB" id="5BKD">
    <property type="method" value="X-ray"/>
    <property type="resolution" value="1.90 A"/>
    <property type="chains" value="A/B=1-295"/>
</dbReference>
<dbReference type="PDBsum" id="5BK9"/>
<dbReference type="PDBsum" id="5BKB"/>
<dbReference type="PDBsum" id="5BKC"/>
<dbReference type="PDBsum" id="5BKD"/>
<dbReference type="SMR" id="P83310"/>
<dbReference type="KEGG" id="ag:AAP88290"/>
<dbReference type="BRENDA" id="1.14.11.44">
    <property type="organism ID" value="1586"/>
</dbReference>
<dbReference type="UniPathway" id="UPA00348"/>
<dbReference type="GO" id="GO:0005737">
    <property type="term" value="C:cytoplasm"/>
    <property type="evidence" value="ECO:0007669"/>
    <property type="project" value="TreeGrafter"/>
</dbReference>
<dbReference type="GO" id="GO:0016706">
    <property type="term" value="F:2-oxoglutarate-dependent dioxygenase activity"/>
    <property type="evidence" value="ECO:0007669"/>
    <property type="project" value="TreeGrafter"/>
</dbReference>
<dbReference type="GO" id="GO:0031418">
    <property type="term" value="F:L-ascorbic acid binding"/>
    <property type="evidence" value="ECO:0007669"/>
    <property type="project" value="UniProtKB-KW"/>
</dbReference>
<dbReference type="GO" id="GO:0046872">
    <property type="term" value="F:metal ion binding"/>
    <property type="evidence" value="ECO:0007669"/>
    <property type="project" value="UniProtKB-KW"/>
</dbReference>
<dbReference type="Gene3D" id="3.60.130.10">
    <property type="entry name" value="Clavaminate synthase-like"/>
    <property type="match status" value="1"/>
</dbReference>
<dbReference type="InterPro" id="IPR051323">
    <property type="entry name" value="AtsK-like"/>
</dbReference>
<dbReference type="InterPro" id="IPR042098">
    <property type="entry name" value="TauD-like_sf"/>
</dbReference>
<dbReference type="InterPro" id="IPR003819">
    <property type="entry name" value="TauD/TfdA-like"/>
</dbReference>
<dbReference type="PANTHER" id="PTHR30468">
    <property type="entry name" value="ALPHA-KETOGLUTARATE-DEPENDENT SULFONATE DIOXYGENASE"/>
    <property type="match status" value="1"/>
</dbReference>
<dbReference type="PANTHER" id="PTHR30468:SF1">
    <property type="entry name" value="ALPHA-KETOGLUTARATE-DEPENDENT SULFONATE DIOXYGENASE"/>
    <property type="match status" value="1"/>
</dbReference>
<dbReference type="Pfam" id="PF02668">
    <property type="entry name" value="TauD"/>
    <property type="match status" value="1"/>
</dbReference>
<dbReference type="SUPFAM" id="SSF51197">
    <property type="entry name" value="Clavaminate synthase-like"/>
    <property type="match status" value="1"/>
</dbReference>
<sequence length="295" mass="33213">MHAALSPLSQRFERIAVQPLTGVLGAEITGVDLREPLDDSTWNEILDAFHTYQVIYFPGQAITNEQHIAFSRRFGPVDPVPLLKSIEGYPEVQMIRREANESGRVIGDDWHTDSTFLDAPPAAVVMRAIDVPEHGGDTGFLSMYTAWETLSPTMQATIEGLNVVHSATRVFGSLYQAQNRRFSNTSVKVMDVDAGDRETVHPLVVTHPGSGRKGLYVNQVYCQRIEGMTDAESKPLLQFLYEHATRFDFTCRVRWKKDQVLVWDNLCTMHRAVPDYAGKFRYLTRTTVGGVRPAR</sequence>